<proteinExistence type="inferred from homology"/>
<evidence type="ECO:0000255" key="1">
    <source>
        <dbReference type="HAMAP-Rule" id="MF_00611"/>
    </source>
</evidence>
<evidence type="ECO:0000256" key="2">
    <source>
        <dbReference type="SAM" id="MobiDB-lite"/>
    </source>
</evidence>
<reference key="1">
    <citation type="submission" date="2009-07" db="EMBL/GenBank/DDBJ databases">
        <title>Complete sequence of Pectobacterium carotovorum subsp. carotovorum PC1.</title>
        <authorList>
            <consortium name="US DOE Joint Genome Institute"/>
            <person name="Lucas S."/>
            <person name="Copeland A."/>
            <person name="Lapidus A."/>
            <person name="Glavina del Rio T."/>
            <person name="Tice H."/>
            <person name="Bruce D."/>
            <person name="Goodwin L."/>
            <person name="Pitluck S."/>
            <person name="Munk A.C."/>
            <person name="Brettin T."/>
            <person name="Detter J.C."/>
            <person name="Han C."/>
            <person name="Tapia R."/>
            <person name="Larimer F."/>
            <person name="Land M."/>
            <person name="Hauser L."/>
            <person name="Kyrpides N."/>
            <person name="Mikhailova N."/>
            <person name="Balakrishnan V."/>
            <person name="Glasner J."/>
            <person name="Perna N.T."/>
        </authorList>
    </citation>
    <scope>NUCLEOTIDE SEQUENCE [LARGE SCALE GENOMIC DNA]</scope>
    <source>
        <strain>PC1</strain>
    </source>
</reference>
<gene>
    <name evidence="1" type="primary">fdhE</name>
    <name type="ordered locus">PC1_2743</name>
</gene>
<accession>C6DA17</accession>
<feature type="chain" id="PRO_1000212267" description="Protein FdhE homolog">
    <location>
        <begin position="1"/>
        <end position="309"/>
    </location>
</feature>
<feature type="region of interest" description="Disordered" evidence="2">
    <location>
        <begin position="1"/>
        <end position="22"/>
    </location>
</feature>
<organism>
    <name type="scientific">Pectobacterium carotovorum subsp. carotovorum (strain PC1)</name>
    <dbReference type="NCBI Taxonomy" id="561230"/>
    <lineage>
        <taxon>Bacteria</taxon>
        <taxon>Pseudomonadati</taxon>
        <taxon>Pseudomonadota</taxon>
        <taxon>Gammaproteobacteria</taxon>
        <taxon>Enterobacterales</taxon>
        <taxon>Pectobacteriaceae</taxon>
        <taxon>Pectobacterium</taxon>
    </lineage>
</organism>
<sequence length="309" mass="34468">MSIRIVPQEQLEQNGKSTPEGHIPPLLFANLKSLYSSRAERLRQLAADHPLGDYLTFAAGVVEAQQKVLHDHPLQLDLSNVLTQSGERPPLDIAVFPRDRHWLTLLRALIEELKPDASGQVLSTLENLEKASEQELEEQATALLQHEFHAENNDKAPFIWAALSLFWAQMASLLPGKARAVPGEHRQFCPVCGSIPVSGVVQLGTSSGLRYLHCNLCESEWHMVRVKCSNCEESSDLNYWSLDSENSAIKAESCGHCGTYLKLLYQEKDHRVEAVADDLASLVLDVKMEEEGFSRSSINPFLFPESSIE</sequence>
<comment type="function">
    <text evidence="1">Necessary for formate dehydrogenase activity.</text>
</comment>
<comment type="subcellular location">
    <subcellularLocation>
        <location evidence="1">Cytoplasm</location>
    </subcellularLocation>
</comment>
<comment type="similarity">
    <text evidence="1">Belongs to the FdhE family.</text>
</comment>
<keyword id="KW-0963">Cytoplasm</keyword>
<dbReference type="EMBL" id="CP001657">
    <property type="protein sequence ID" value="ACT13773.1"/>
    <property type="molecule type" value="Genomic_DNA"/>
</dbReference>
<dbReference type="RefSeq" id="WP_015840940.1">
    <property type="nucleotide sequence ID" value="NC_012917.1"/>
</dbReference>
<dbReference type="SMR" id="C6DA17"/>
<dbReference type="STRING" id="561230.PC1_2743"/>
<dbReference type="KEGG" id="pct:PC1_2743"/>
<dbReference type="eggNOG" id="COG3058">
    <property type="taxonomic scope" value="Bacteria"/>
</dbReference>
<dbReference type="HOGENOM" id="CLU_055275_0_0_6"/>
<dbReference type="OrthoDB" id="9794151at2"/>
<dbReference type="Proteomes" id="UP000002736">
    <property type="component" value="Chromosome"/>
</dbReference>
<dbReference type="GO" id="GO:0005829">
    <property type="term" value="C:cytosol"/>
    <property type="evidence" value="ECO:0007669"/>
    <property type="project" value="TreeGrafter"/>
</dbReference>
<dbReference type="GO" id="GO:0008199">
    <property type="term" value="F:ferric iron binding"/>
    <property type="evidence" value="ECO:0007669"/>
    <property type="project" value="TreeGrafter"/>
</dbReference>
<dbReference type="GO" id="GO:0051604">
    <property type="term" value="P:protein maturation"/>
    <property type="evidence" value="ECO:0007669"/>
    <property type="project" value="TreeGrafter"/>
</dbReference>
<dbReference type="CDD" id="cd16341">
    <property type="entry name" value="FdhE"/>
    <property type="match status" value="1"/>
</dbReference>
<dbReference type="FunFam" id="3.90.1670.10:FF:000001">
    <property type="entry name" value="Protein FdhE"/>
    <property type="match status" value="1"/>
</dbReference>
<dbReference type="Gene3D" id="3.90.1670.10">
    <property type="entry name" value="FdhE-like domain"/>
    <property type="match status" value="1"/>
</dbReference>
<dbReference type="HAMAP" id="MF_00611">
    <property type="entry name" value="FdeH"/>
    <property type="match status" value="1"/>
</dbReference>
<dbReference type="InterPro" id="IPR024064">
    <property type="entry name" value="FdhE-like_sf"/>
</dbReference>
<dbReference type="InterPro" id="IPR056796">
    <property type="entry name" value="FdhE_C"/>
</dbReference>
<dbReference type="InterPro" id="IPR056797">
    <property type="entry name" value="FdhE_central"/>
</dbReference>
<dbReference type="InterPro" id="IPR056774">
    <property type="entry name" value="FdhE_N"/>
</dbReference>
<dbReference type="InterPro" id="IPR006452">
    <property type="entry name" value="Formate_DH_accessory"/>
</dbReference>
<dbReference type="NCBIfam" id="TIGR01562">
    <property type="entry name" value="FdhE"/>
    <property type="match status" value="1"/>
</dbReference>
<dbReference type="NCBIfam" id="NF002925">
    <property type="entry name" value="PRK03564.1"/>
    <property type="match status" value="1"/>
</dbReference>
<dbReference type="PANTHER" id="PTHR37689">
    <property type="entry name" value="PROTEIN FDHE"/>
    <property type="match status" value="1"/>
</dbReference>
<dbReference type="PANTHER" id="PTHR37689:SF1">
    <property type="entry name" value="PROTEIN FDHE"/>
    <property type="match status" value="1"/>
</dbReference>
<dbReference type="Pfam" id="PF24860">
    <property type="entry name" value="FdhE_C"/>
    <property type="match status" value="1"/>
</dbReference>
<dbReference type="Pfam" id="PF24859">
    <property type="entry name" value="FdhE_central"/>
    <property type="match status" value="1"/>
</dbReference>
<dbReference type="Pfam" id="PF04216">
    <property type="entry name" value="FdhE_N"/>
    <property type="match status" value="1"/>
</dbReference>
<dbReference type="PIRSF" id="PIRSF018296">
    <property type="entry name" value="Format_dh_formtn"/>
    <property type="match status" value="1"/>
</dbReference>
<dbReference type="SUPFAM" id="SSF144020">
    <property type="entry name" value="FdhE-like"/>
    <property type="match status" value="1"/>
</dbReference>
<name>FDHE_PECCP</name>
<protein>
    <recommendedName>
        <fullName evidence="1">Protein FdhE homolog</fullName>
    </recommendedName>
</protein>